<comment type="function">
    <text evidence="1">Specifically methylates guanosine-37 in various tRNAs.</text>
</comment>
<comment type="catalytic activity">
    <reaction evidence="1">
        <text>guanosine(37) in tRNA + S-adenosyl-L-methionine = N(1)-methylguanosine(37) in tRNA + S-adenosyl-L-homocysteine + H(+)</text>
        <dbReference type="Rhea" id="RHEA:36899"/>
        <dbReference type="Rhea" id="RHEA-COMP:10145"/>
        <dbReference type="Rhea" id="RHEA-COMP:10147"/>
        <dbReference type="ChEBI" id="CHEBI:15378"/>
        <dbReference type="ChEBI" id="CHEBI:57856"/>
        <dbReference type="ChEBI" id="CHEBI:59789"/>
        <dbReference type="ChEBI" id="CHEBI:73542"/>
        <dbReference type="ChEBI" id="CHEBI:74269"/>
        <dbReference type="EC" id="2.1.1.228"/>
    </reaction>
</comment>
<comment type="subunit">
    <text evidence="1">Homodimer.</text>
</comment>
<comment type="subcellular location">
    <subcellularLocation>
        <location evidence="1">Cytoplasm</location>
    </subcellularLocation>
</comment>
<comment type="similarity">
    <text evidence="1">Belongs to the RNA methyltransferase TrmD family.</text>
</comment>
<accession>Q5WFN6</accession>
<sequence>MKIDVLTLFPDMFTGVFGSSILKQASDKGIVSFQTVDFREYAANKHRKVDDYPYGGGAGMVLSPQPIFDAVSALTKNGKKKPRIIMLCPQGEQHSQQKAAELAKEEHLIFLCGHYEGFDERVRHLVTDELSIGDYVLTGGELAAMVIADSVVRLLPGVLGNDESAVTDSYSTGLLEHPHYTRPADFRGMKVPDVLLSGHHAKIEEWRMEQSLRRTLERRPDLLKGYEPTAKEADILKRLMDKQE</sequence>
<gene>
    <name evidence="1" type="primary">trmD</name>
    <name type="ordered locus">ABC2289</name>
</gene>
<organism>
    <name type="scientific">Shouchella clausii (strain KSM-K16)</name>
    <name type="common">Alkalihalobacillus clausii</name>
    <dbReference type="NCBI Taxonomy" id="66692"/>
    <lineage>
        <taxon>Bacteria</taxon>
        <taxon>Bacillati</taxon>
        <taxon>Bacillota</taxon>
        <taxon>Bacilli</taxon>
        <taxon>Bacillales</taxon>
        <taxon>Bacillaceae</taxon>
        <taxon>Shouchella</taxon>
    </lineage>
</organism>
<feature type="chain" id="PRO_0000060323" description="tRNA (guanine-N(1)-)-methyltransferase">
    <location>
        <begin position="1"/>
        <end position="244"/>
    </location>
</feature>
<feature type="binding site" evidence="1">
    <location>
        <position position="113"/>
    </location>
    <ligand>
        <name>S-adenosyl-L-methionine</name>
        <dbReference type="ChEBI" id="CHEBI:59789"/>
    </ligand>
</feature>
<feature type="binding site" evidence="1">
    <location>
        <begin position="132"/>
        <end position="137"/>
    </location>
    <ligand>
        <name>S-adenosyl-L-methionine</name>
        <dbReference type="ChEBI" id="CHEBI:59789"/>
    </ligand>
</feature>
<evidence type="ECO:0000255" key="1">
    <source>
        <dbReference type="HAMAP-Rule" id="MF_00605"/>
    </source>
</evidence>
<dbReference type="EC" id="2.1.1.228" evidence="1"/>
<dbReference type="EMBL" id="AP006627">
    <property type="protein sequence ID" value="BAD64824.1"/>
    <property type="molecule type" value="Genomic_DNA"/>
</dbReference>
<dbReference type="RefSeq" id="WP_011247132.1">
    <property type="nucleotide sequence ID" value="NC_006582.1"/>
</dbReference>
<dbReference type="SMR" id="Q5WFN6"/>
<dbReference type="STRING" id="66692.ABC2289"/>
<dbReference type="KEGG" id="bcl:ABC2289"/>
<dbReference type="eggNOG" id="COG0336">
    <property type="taxonomic scope" value="Bacteria"/>
</dbReference>
<dbReference type="HOGENOM" id="CLU_047363_0_1_9"/>
<dbReference type="OrthoDB" id="9807416at2"/>
<dbReference type="Proteomes" id="UP000001168">
    <property type="component" value="Chromosome"/>
</dbReference>
<dbReference type="GO" id="GO:0005829">
    <property type="term" value="C:cytosol"/>
    <property type="evidence" value="ECO:0007669"/>
    <property type="project" value="TreeGrafter"/>
</dbReference>
<dbReference type="GO" id="GO:0052906">
    <property type="term" value="F:tRNA (guanine(37)-N1)-methyltransferase activity"/>
    <property type="evidence" value="ECO:0007669"/>
    <property type="project" value="UniProtKB-UniRule"/>
</dbReference>
<dbReference type="GO" id="GO:0002939">
    <property type="term" value="P:tRNA N1-guanine methylation"/>
    <property type="evidence" value="ECO:0007669"/>
    <property type="project" value="TreeGrafter"/>
</dbReference>
<dbReference type="CDD" id="cd18080">
    <property type="entry name" value="TrmD-like"/>
    <property type="match status" value="1"/>
</dbReference>
<dbReference type="FunFam" id="1.10.1270.20:FF:000001">
    <property type="entry name" value="tRNA (guanine-N(1)-)-methyltransferase"/>
    <property type="match status" value="1"/>
</dbReference>
<dbReference type="FunFam" id="3.40.1280.10:FF:000001">
    <property type="entry name" value="tRNA (guanine-N(1)-)-methyltransferase"/>
    <property type="match status" value="1"/>
</dbReference>
<dbReference type="Gene3D" id="3.40.1280.10">
    <property type="match status" value="1"/>
</dbReference>
<dbReference type="Gene3D" id="1.10.1270.20">
    <property type="entry name" value="tRNA(m1g37)methyltransferase, domain 2"/>
    <property type="match status" value="1"/>
</dbReference>
<dbReference type="HAMAP" id="MF_00605">
    <property type="entry name" value="TrmD"/>
    <property type="match status" value="1"/>
</dbReference>
<dbReference type="InterPro" id="IPR029028">
    <property type="entry name" value="Alpha/beta_knot_MTases"/>
</dbReference>
<dbReference type="InterPro" id="IPR023148">
    <property type="entry name" value="tRNA_m1G_MeTrfase_C_sf"/>
</dbReference>
<dbReference type="InterPro" id="IPR002649">
    <property type="entry name" value="tRNA_m1G_MeTrfase_TrmD"/>
</dbReference>
<dbReference type="InterPro" id="IPR029026">
    <property type="entry name" value="tRNA_m1G_MTases_N"/>
</dbReference>
<dbReference type="InterPro" id="IPR016009">
    <property type="entry name" value="tRNA_MeTrfase_TRMD/TRM10"/>
</dbReference>
<dbReference type="NCBIfam" id="NF000648">
    <property type="entry name" value="PRK00026.1"/>
    <property type="match status" value="1"/>
</dbReference>
<dbReference type="NCBIfam" id="TIGR00088">
    <property type="entry name" value="trmD"/>
    <property type="match status" value="1"/>
</dbReference>
<dbReference type="PANTHER" id="PTHR46417">
    <property type="entry name" value="TRNA (GUANINE-N(1)-)-METHYLTRANSFERASE"/>
    <property type="match status" value="1"/>
</dbReference>
<dbReference type="PANTHER" id="PTHR46417:SF1">
    <property type="entry name" value="TRNA (GUANINE-N(1)-)-METHYLTRANSFERASE"/>
    <property type="match status" value="1"/>
</dbReference>
<dbReference type="Pfam" id="PF01746">
    <property type="entry name" value="tRNA_m1G_MT"/>
    <property type="match status" value="1"/>
</dbReference>
<dbReference type="PIRSF" id="PIRSF000386">
    <property type="entry name" value="tRNA_mtase"/>
    <property type="match status" value="1"/>
</dbReference>
<dbReference type="SUPFAM" id="SSF75217">
    <property type="entry name" value="alpha/beta knot"/>
    <property type="match status" value="1"/>
</dbReference>
<protein>
    <recommendedName>
        <fullName evidence="1">tRNA (guanine-N(1)-)-methyltransferase</fullName>
        <ecNumber evidence="1">2.1.1.228</ecNumber>
    </recommendedName>
    <alternativeName>
        <fullName evidence="1">M1G-methyltransferase</fullName>
    </alternativeName>
    <alternativeName>
        <fullName evidence="1">tRNA [GM37] methyltransferase</fullName>
    </alternativeName>
</protein>
<name>TRMD_SHOC1</name>
<reference key="1">
    <citation type="submission" date="2003-10" db="EMBL/GenBank/DDBJ databases">
        <title>The complete genome sequence of the alkaliphilic Bacillus clausii KSM-K16.</title>
        <authorList>
            <person name="Takaki Y."/>
            <person name="Kageyama Y."/>
            <person name="Shimamura S."/>
            <person name="Suzuki H."/>
            <person name="Nishi S."/>
            <person name="Hatada Y."/>
            <person name="Kawai S."/>
            <person name="Ito S."/>
            <person name="Horikoshi K."/>
        </authorList>
    </citation>
    <scope>NUCLEOTIDE SEQUENCE [LARGE SCALE GENOMIC DNA]</scope>
    <source>
        <strain>KSM-K16</strain>
    </source>
</reference>
<keyword id="KW-0963">Cytoplasm</keyword>
<keyword id="KW-0489">Methyltransferase</keyword>
<keyword id="KW-1185">Reference proteome</keyword>
<keyword id="KW-0949">S-adenosyl-L-methionine</keyword>
<keyword id="KW-0808">Transferase</keyword>
<keyword id="KW-0819">tRNA processing</keyword>
<proteinExistence type="inferred from homology"/>